<gene>
    <name type="ordered locus">Ken-115</name>
</gene>
<organism>
    <name type="scientific">African swine fever virus (isolate Pig/Kenya/KEN-50/1950)</name>
    <name type="common">ASFV</name>
    <dbReference type="NCBI Taxonomy" id="561445"/>
    <lineage>
        <taxon>Viruses</taxon>
        <taxon>Varidnaviria</taxon>
        <taxon>Bamfordvirae</taxon>
        <taxon>Nucleocytoviricota</taxon>
        <taxon>Pokkesviricetes</taxon>
        <taxon>Asfuvirales</taxon>
        <taxon>Asfarviridae</taxon>
        <taxon>Asfivirus</taxon>
        <taxon>African swine fever virus</taxon>
    </lineage>
</organism>
<sequence>MDLNPLLYLQAFNNDATTFNTQGHILEQQSDPTYFDTFASAMQAYIDTKQGGNDEEGTIIIMDDEDFNDSESLEDFLQMMNDEELNDRFSSDDEPEERVNPHEVNFMEINLHRDNQYESSKAPQATFDITEFIKTEEDDD</sequence>
<accession>P0CAM4</accession>
<dbReference type="EMBL" id="AY261360">
    <property type="status" value="NOT_ANNOTATED_CDS"/>
    <property type="molecule type" value="Genomic_DNA"/>
</dbReference>
<dbReference type="Proteomes" id="UP000000861">
    <property type="component" value="Segment"/>
</dbReference>
<evidence type="ECO:0000305" key="1"/>
<feature type="chain" id="PRO_0000373757" description="Uncharacterized protein D129L">
    <location>
        <begin position="1"/>
        <end position="140"/>
    </location>
</feature>
<proteinExistence type="inferred from homology"/>
<name>VFD29_ASFK5</name>
<comment type="similarity">
    <text evidence="1">Belongs to the asfivirus D129L family.</text>
</comment>
<reference key="1">
    <citation type="submission" date="2003-03" db="EMBL/GenBank/DDBJ databases">
        <title>African swine fever virus genomes.</title>
        <authorList>
            <person name="Kutish G.F."/>
            <person name="Rock D.L."/>
        </authorList>
    </citation>
    <scope>NUCLEOTIDE SEQUENCE [LARGE SCALE GENOMIC DNA]</scope>
</reference>
<protein>
    <recommendedName>
        <fullName>Uncharacterized protein D129L</fullName>
        <shortName>pD129L</shortName>
    </recommendedName>
</protein>
<organismHost>
    <name type="scientific">Ornithodoros</name>
    <name type="common">relapsing fever ticks</name>
    <dbReference type="NCBI Taxonomy" id="6937"/>
</organismHost>
<organismHost>
    <name type="scientific">Phacochoerus aethiopicus</name>
    <name type="common">Warthog</name>
    <dbReference type="NCBI Taxonomy" id="85517"/>
</organismHost>
<organismHost>
    <name type="scientific">Phacochoerus africanus</name>
    <name type="common">Warthog</name>
    <dbReference type="NCBI Taxonomy" id="41426"/>
</organismHost>
<organismHost>
    <name type="scientific">Potamochoerus larvatus</name>
    <name type="common">Bushpig</name>
    <dbReference type="NCBI Taxonomy" id="273792"/>
</organismHost>
<organismHost>
    <name type="scientific">Sus scrofa</name>
    <name type="common">Pig</name>
    <dbReference type="NCBI Taxonomy" id="9823"/>
</organismHost>